<evidence type="ECO:0000255" key="1">
    <source>
        <dbReference type="HAMAP-Rule" id="MF_00051"/>
    </source>
</evidence>
<organism>
    <name type="scientific">Polynucleobacter asymbioticus (strain DSM 18221 / CIP 109841 / QLW-P1DMWA-1)</name>
    <name type="common">Polynucleobacter necessarius subsp. asymbioticus</name>
    <dbReference type="NCBI Taxonomy" id="312153"/>
    <lineage>
        <taxon>Bacteria</taxon>
        <taxon>Pseudomonadati</taxon>
        <taxon>Pseudomonadota</taxon>
        <taxon>Betaproteobacteria</taxon>
        <taxon>Burkholderiales</taxon>
        <taxon>Burkholderiaceae</taxon>
        <taxon>Polynucleobacter</taxon>
    </lineage>
</organism>
<reference key="1">
    <citation type="journal article" date="2012" name="Stand. Genomic Sci.">
        <title>Complete genome sequence of Polynucleobacter necessarius subsp. asymbioticus type strain (QLW-P1DMWA-1(T)).</title>
        <authorList>
            <person name="Meincke L."/>
            <person name="Copeland A."/>
            <person name="Lapidus A."/>
            <person name="Lucas S."/>
            <person name="Berry K.W."/>
            <person name="Del Rio T.G."/>
            <person name="Hammon N."/>
            <person name="Dalin E."/>
            <person name="Tice H."/>
            <person name="Pitluck S."/>
            <person name="Richardson P."/>
            <person name="Bruce D."/>
            <person name="Goodwin L."/>
            <person name="Han C."/>
            <person name="Tapia R."/>
            <person name="Detter J.C."/>
            <person name="Schmutz J."/>
            <person name="Brettin T."/>
            <person name="Larimer F."/>
            <person name="Land M."/>
            <person name="Hauser L."/>
            <person name="Kyrpides N.C."/>
            <person name="Ivanova N."/>
            <person name="Goker M."/>
            <person name="Woyke T."/>
            <person name="Wu Q.L."/>
            <person name="Pockl M."/>
            <person name="Hahn M.W."/>
            <person name="Klenk H.P."/>
        </authorList>
    </citation>
    <scope>NUCLEOTIDE SEQUENCE [LARGE SCALE GENOMIC DNA]</scope>
    <source>
        <strain>DSM 18221 / CIP 109841 / QLW-P1DMWA-1</strain>
    </source>
</reference>
<comment type="function">
    <text evidence="1">Catalyzes the reversible interconversion of serine and glycine with tetrahydrofolate (THF) serving as the one-carbon carrier. This reaction serves as the major source of one-carbon groups required for the biosynthesis of purines, thymidylate, methionine, and other important biomolecules. Also exhibits THF-independent aldolase activity toward beta-hydroxyamino acids, producing glycine and aldehydes, via a retro-aldol mechanism.</text>
</comment>
<comment type="catalytic activity">
    <reaction evidence="1">
        <text>(6R)-5,10-methylene-5,6,7,8-tetrahydrofolate + glycine + H2O = (6S)-5,6,7,8-tetrahydrofolate + L-serine</text>
        <dbReference type="Rhea" id="RHEA:15481"/>
        <dbReference type="ChEBI" id="CHEBI:15377"/>
        <dbReference type="ChEBI" id="CHEBI:15636"/>
        <dbReference type="ChEBI" id="CHEBI:33384"/>
        <dbReference type="ChEBI" id="CHEBI:57305"/>
        <dbReference type="ChEBI" id="CHEBI:57453"/>
        <dbReference type="EC" id="2.1.2.1"/>
    </reaction>
</comment>
<comment type="cofactor">
    <cofactor evidence="1">
        <name>pyridoxal 5'-phosphate</name>
        <dbReference type="ChEBI" id="CHEBI:597326"/>
    </cofactor>
</comment>
<comment type="pathway">
    <text evidence="1">One-carbon metabolism; tetrahydrofolate interconversion.</text>
</comment>
<comment type="pathway">
    <text evidence="1">Amino-acid biosynthesis; glycine biosynthesis; glycine from L-serine: step 1/1.</text>
</comment>
<comment type="subunit">
    <text evidence="1">Homodimer.</text>
</comment>
<comment type="subcellular location">
    <subcellularLocation>
        <location evidence="1">Cytoplasm</location>
    </subcellularLocation>
</comment>
<comment type="similarity">
    <text evidence="1">Belongs to the SHMT family.</text>
</comment>
<feature type="chain" id="PRO_1000074903" description="Serine hydroxymethyltransferase">
    <location>
        <begin position="1"/>
        <end position="414"/>
    </location>
</feature>
<feature type="binding site" evidence="1">
    <location>
        <position position="121"/>
    </location>
    <ligand>
        <name>(6S)-5,6,7,8-tetrahydrofolate</name>
        <dbReference type="ChEBI" id="CHEBI:57453"/>
    </ligand>
</feature>
<feature type="binding site" evidence="1">
    <location>
        <begin position="125"/>
        <end position="127"/>
    </location>
    <ligand>
        <name>(6S)-5,6,7,8-tetrahydrofolate</name>
        <dbReference type="ChEBI" id="CHEBI:57453"/>
    </ligand>
</feature>
<feature type="site" description="Plays an important role in substrate specificity" evidence="1">
    <location>
        <position position="228"/>
    </location>
</feature>
<feature type="modified residue" description="N6-(pyridoxal phosphate)lysine" evidence="1">
    <location>
        <position position="229"/>
    </location>
</feature>
<sequence length="414" mass="44812">MFDRQNTLAKTDPQLWAAIQNENKRQEDHIELIASENYTSPAVMEAQGSQLTNKYAEGYPGKRYYGGCEFVDVAEQLAIDRVKALFGAEAANVQPHCGASANQAVFLAFLKPGDTFMGMSLAEGGHLTHGMALNMSGKWFNPIAYGLDKNEEIDYEQMERLAREHKPKLIIAGASAYSKKIDFERIGKLAKEVGAIFMVDMAHYAGLVAAGVYPNPVPHADIVTSTTHKSLRGPRGGIILMKAEHEKAINSAVFPGLQGGPLMHVIAGKAAAFKEAAEPGFKDYQKQVVANAKALAETLIARGLRIVSGGTDSHVMLVDLRAKKMTGKEAEHVLGEAHITCNKNGIPNDPEKPMVTSGIRLGSPAMTTRGFKEAEAVQVGNFIADVLDNPNDPENIAKVRAQVAELTKRFPVYG</sequence>
<protein>
    <recommendedName>
        <fullName evidence="1">Serine hydroxymethyltransferase</fullName>
        <shortName evidence="1">SHMT</shortName>
        <shortName evidence="1">Serine methylase</shortName>
        <ecNumber evidence="1">2.1.2.1</ecNumber>
    </recommendedName>
</protein>
<dbReference type="EC" id="2.1.2.1" evidence="1"/>
<dbReference type="EMBL" id="CP000655">
    <property type="protein sequence ID" value="ABP33500.1"/>
    <property type="molecule type" value="Genomic_DNA"/>
</dbReference>
<dbReference type="RefSeq" id="WP_011902125.1">
    <property type="nucleotide sequence ID" value="NC_009379.1"/>
</dbReference>
<dbReference type="SMR" id="A4SVI6"/>
<dbReference type="GeneID" id="31480629"/>
<dbReference type="KEGG" id="pnu:Pnuc_0279"/>
<dbReference type="eggNOG" id="COG0112">
    <property type="taxonomic scope" value="Bacteria"/>
</dbReference>
<dbReference type="HOGENOM" id="CLU_022477_2_1_4"/>
<dbReference type="UniPathway" id="UPA00193"/>
<dbReference type="UniPathway" id="UPA00288">
    <property type="reaction ID" value="UER01023"/>
</dbReference>
<dbReference type="Proteomes" id="UP000000231">
    <property type="component" value="Chromosome"/>
</dbReference>
<dbReference type="GO" id="GO:0005829">
    <property type="term" value="C:cytosol"/>
    <property type="evidence" value="ECO:0007669"/>
    <property type="project" value="TreeGrafter"/>
</dbReference>
<dbReference type="GO" id="GO:0004372">
    <property type="term" value="F:glycine hydroxymethyltransferase activity"/>
    <property type="evidence" value="ECO:0007669"/>
    <property type="project" value="UniProtKB-UniRule"/>
</dbReference>
<dbReference type="GO" id="GO:0030170">
    <property type="term" value="F:pyridoxal phosphate binding"/>
    <property type="evidence" value="ECO:0007669"/>
    <property type="project" value="UniProtKB-UniRule"/>
</dbReference>
<dbReference type="GO" id="GO:0019264">
    <property type="term" value="P:glycine biosynthetic process from serine"/>
    <property type="evidence" value="ECO:0007669"/>
    <property type="project" value="UniProtKB-UniRule"/>
</dbReference>
<dbReference type="GO" id="GO:0035999">
    <property type="term" value="P:tetrahydrofolate interconversion"/>
    <property type="evidence" value="ECO:0007669"/>
    <property type="project" value="UniProtKB-UniRule"/>
</dbReference>
<dbReference type="CDD" id="cd00378">
    <property type="entry name" value="SHMT"/>
    <property type="match status" value="1"/>
</dbReference>
<dbReference type="FunFam" id="3.40.640.10:FF:000001">
    <property type="entry name" value="Serine hydroxymethyltransferase"/>
    <property type="match status" value="1"/>
</dbReference>
<dbReference type="FunFam" id="3.90.1150.10:FF:000003">
    <property type="entry name" value="Serine hydroxymethyltransferase"/>
    <property type="match status" value="1"/>
</dbReference>
<dbReference type="Gene3D" id="3.90.1150.10">
    <property type="entry name" value="Aspartate Aminotransferase, domain 1"/>
    <property type="match status" value="1"/>
</dbReference>
<dbReference type="Gene3D" id="3.40.640.10">
    <property type="entry name" value="Type I PLP-dependent aspartate aminotransferase-like (Major domain)"/>
    <property type="match status" value="1"/>
</dbReference>
<dbReference type="HAMAP" id="MF_00051">
    <property type="entry name" value="SHMT"/>
    <property type="match status" value="1"/>
</dbReference>
<dbReference type="InterPro" id="IPR015424">
    <property type="entry name" value="PyrdxlP-dep_Trfase"/>
</dbReference>
<dbReference type="InterPro" id="IPR015421">
    <property type="entry name" value="PyrdxlP-dep_Trfase_major"/>
</dbReference>
<dbReference type="InterPro" id="IPR015422">
    <property type="entry name" value="PyrdxlP-dep_Trfase_small"/>
</dbReference>
<dbReference type="InterPro" id="IPR001085">
    <property type="entry name" value="Ser_HO-MeTrfase"/>
</dbReference>
<dbReference type="InterPro" id="IPR049943">
    <property type="entry name" value="Ser_HO-MeTrfase-like"/>
</dbReference>
<dbReference type="InterPro" id="IPR019798">
    <property type="entry name" value="Ser_HO-MeTrfase_PLP_BS"/>
</dbReference>
<dbReference type="InterPro" id="IPR039429">
    <property type="entry name" value="SHMT-like_dom"/>
</dbReference>
<dbReference type="NCBIfam" id="NF000586">
    <property type="entry name" value="PRK00011.1"/>
    <property type="match status" value="1"/>
</dbReference>
<dbReference type="PANTHER" id="PTHR11680">
    <property type="entry name" value="SERINE HYDROXYMETHYLTRANSFERASE"/>
    <property type="match status" value="1"/>
</dbReference>
<dbReference type="PANTHER" id="PTHR11680:SF50">
    <property type="entry name" value="SERINE HYDROXYMETHYLTRANSFERASE"/>
    <property type="match status" value="1"/>
</dbReference>
<dbReference type="Pfam" id="PF00464">
    <property type="entry name" value="SHMT"/>
    <property type="match status" value="1"/>
</dbReference>
<dbReference type="PIRSF" id="PIRSF000412">
    <property type="entry name" value="SHMT"/>
    <property type="match status" value="1"/>
</dbReference>
<dbReference type="SUPFAM" id="SSF53383">
    <property type="entry name" value="PLP-dependent transferases"/>
    <property type="match status" value="1"/>
</dbReference>
<dbReference type="PROSITE" id="PS00096">
    <property type="entry name" value="SHMT"/>
    <property type="match status" value="1"/>
</dbReference>
<name>GLYA_POLAQ</name>
<gene>
    <name evidence="1" type="primary">glyA</name>
    <name type="ordered locus">Pnuc_0279</name>
</gene>
<keyword id="KW-0028">Amino-acid biosynthesis</keyword>
<keyword id="KW-0963">Cytoplasm</keyword>
<keyword id="KW-0554">One-carbon metabolism</keyword>
<keyword id="KW-0663">Pyridoxal phosphate</keyword>
<keyword id="KW-1185">Reference proteome</keyword>
<keyword id="KW-0808">Transferase</keyword>
<accession>A4SVI6</accession>
<proteinExistence type="inferred from homology"/>